<gene>
    <name type="primary">rtp</name>
    <name type="ordered locus">BSUW23_09840</name>
</gene>
<sequence>MKEEKRSSTGFLVKQRAFLKLYMITMTEQERLYGLKLLEVLRSEFKEIGFKPNHTEVYRSLHELLDDGILKQIKVKKEGAKLQEVVLYQFKDYEAAKLYKKQLKVELDRCKKLIEKALSDNF</sequence>
<protein>
    <recommendedName>
        <fullName>Replication termination protein</fullName>
    </recommendedName>
    <alternativeName>
        <fullName>Replication terminator protein</fullName>
    </alternativeName>
</protein>
<accession>E0TY12</accession>
<accession>P14382</accession>
<accession>P68732</accession>
<dbReference type="EMBL" id="M24523">
    <property type="protein sequence ID" value="AAA22721.1"/>
    <property type="molecule type" value="Genomic_DNA"/>
</dbReference>
<dbReference type="EMBL" id="CP002183">
    <property type="protein sequence ID" value="ADM38012.1"/>
    <property type="molecule type" value="Genomic_DNA"/>
</dbReference>
<dbReference type="PIR" id="A32807">
    <property type="entry name" value="A32807"/>
</dbReference>
<dbReference type="RefSeq" id="WP_003220337.1">
    <property type="nucleotide sequence ID" value="NZ_CP148102.1"/>
</dbReference>
<dbReference type="BMRB" id="E0TY12"/>
<dbReference type="SMR" id="E0TY12"/>
<dbReference type="GeneID" id="76986963"/>
<dbReference type="KEGG" id="bss:BSUW23_09840"/>
<dbReference type="HOGENOM" id="CLU_1999150_0_0_9"/>
<dbReference type="Proteomes" id="UP000002233">
    <property type="component" value="Chromosome"/>
</dbReference>
<dbReference type="GO" id="GO:0003677">
    <property type="term" value="F:DNA binding"/>
    <property type="evidence" value="ECO:0007669"/>
    <property type="project" value="UniProtKB-KW"/>
</dbReference>
<dbReference type="GO" id="GO:0006274">
    <property type="term" value="P:DNA replication termination"/>
    <property type="evidence" value="ECO:0007669"/>
    <property type="project" value="InterPro"/>
</dbReference>
<dbReference type="Gene3D" id="1.10.10.10">
    <property type="entry name" value="Winged helix-like DNA-binding domain superfamily/Winged helix DNA-binding domain"/>
    <property type="match status" value="1"/>
</dbReference>
<dbReference type="InterPro" id="IPR003432">
    <property type="entry name" value="RTP"/>
</dbReference>
<dbReference type="InterPro" id="IPR036388">
    <property type="entry name" value="WH-like_DNA-bd_sf"/>
</dbReference>
<dbReference type="InterPro" id="IPR036390">
    <property type="entry name" value="WH_DNA-bd_sf"/>
</dbReference>
<dbReference type="Pfam" id="PF02334">
    <property type="entry name" value="RTP"/>
    <property type="match status" value="1"/>
</dbReference>
<dbReference type="PIRSF" id="PIRSF021424">
    <property type="entry name" value="RTP"/>
    <property type="match status" value="1"/>
</dbReference>
<dbReference type="SUPFAM" id="SSF46785">
    <property type="entry name" value="Winged helix' DNA-binding domain"/>
    <property type="match status" value="1"/>
</dbReference>
<keyword id="KW-0238">DNA-binding</keyword>
<name>RTP_BACSH</name>
<proteinExistence type="inferred from homology"/>
<evidence type="ECO:0000250" key="1"/>
<feature type="chain" id="PRO_0000403661" description="Replication termination protein">
    <location>
        <begin position="1"/>
        <end position="122"/>
    </location>
</feature>
<reference key="1">
    <citation type="journal article" date="1989" name="J. Bacteriol.">
        <title>DNA and protein sequence conservation at the replication terminus in Bacillus subtilis 168 and W23.</title>
        <authorList>
            <person name="Lewis P.J."/>
            <person name="Wake R.G."/>
        </authorList>
    </citation>
    <scope>NUCLEOTIDE SEQUENCE [GENOMIC DNA]</scope>
    <source>
        <strain>ATCC 23059 / NRRL B-14472 / W23</strain>
    </source>
</reference>
<reference key="2">
    <citation type="journal article" date="1991" name="Gene">
        <title>Variations and coding features of the sequence spanning the replication terminus of Bacillus subtilis 168 and W23 chromosomes.</title>
        <authorList>
            <person name="Ahn K.S."/>
            <person name="Wake R.G."/>
        </authorList>
    </citation>
    <scope>NUCLEOTIDE SEQUENCE [GENOMIC DNA]</scope>
    <source>
        <strain>ATCC 23059 / NRRL B-14472 / W23</strain>
    </source>
</reference>
<reference key="3">
    <citation type="journal article" date="2011" name="Microbiology">
        <title>The genome sequence of Bacillus subtilis subsp. spizizenii W23: insights into speciation within the B. subtilis complex and into the history of B. subtilis genetics.</title>
        <authorList>
            <person name="Zeigler D.R."/>
        </authorList>
    </citation>
    <scope>NUCLEOTIDE SEQUENCE [LARGE SCALE GENOMIC DNA]</scope>
    <source>
        <strain>ATCC 23059 / NRRL B-14472 / W23</strain>
    </source>
</reference>
<comment type="function">
    <text evidence="1">Plays a role in DNA replication and termination (fork arrest mechanism). Two dimers of rtp bind to the two inverted repeat regions (IRI and IRII) present in the termination site. The binding of each dimer is centered on an 8 bp direct repeat (By similarity).</text>
</comment>
<comment type="subunit">
    <text evidence="1">Homodimer.</text>
</comment>
<organism>
    <name type="scientific">Bacillus spizizenii (strain ATCC 23059 / NRRL B-14472 / W23)</name>
    <name type="common">Bacillus subtilis subsp. spizizenii</name>
    <dbReference type="NCBI Taxonomy" id="655816"/>
    <lineage>
        <taxon>Bacteria</taxon>
        <taxon>Bacillati</taxon>
        <taxon>Bacillota</taxon>
        <taxon>Bacilli</taxon>
        <taxon>Bacillales</taxon>
        <taxon>Bacillaceae</taxon>
        <taxon>Bacillus</taxon>
    </lineage>
</organism>